<organism>
    <name type="scientific">Chloroflexus aurantiacus (strain ATCC 29364 / DSM 637 / Y-400-fl)</name>
    <dbReference type="NCBI Taxonomy" id="480224"/>
    <lineage>
        <taxon>Bacteria</taxon>
        <taxon>Bacillati</taxon>
        <taxon>Chloroflexota</taxon>
        <taxon>Chloroflexia</taxon>
        <taxon>Chloroflexales</taxon>
        <taxon>Chloroflexineae</taxon>
        <taxon>Chloroflexaceae</taxon>
        <taxon>Chloroflexus</taxon>
    </lineage>
</organism>
<proteinExistence type="inferred from homology"/>
<protein>
    <recommendedName>
        <fullName evidence="1">Phosphoenolpyruvate guanylyltransferase</fullName>
        <shortName evidence="1">PEP guanylyltransferase</shortName>
        <ecNumber evidence="1">2.7.7.105</ecNumber>
    </recommendedName>
</protein>
<gene>
    <name evidence="1" type="primary">fbiD</name>
    <name type="ordered locus">Chy400_0217</name>
</gene>
<name>FBID_CHLSY</name>
<comment type="function">
    <text evidence="1">Guanylyltransferase that catalyzes the activation of phosphoenolpyruvate (PEP) as enolpyruvoyl-2-diphospho-5'-guanosine, via the condensation of PEP with GTP. It is involved in the biosynthesis of coenzyme F420, a hydride carrier cofactor.</text>
</comment>
<comment type="catalytic activity">
    <reaction evidence="1">
        <text>phosphoenolpyruvate + GTP + H(+) = enolpyruvoyl-2-diphospho-5'-guanosine + diphosphate</text>
        <dbReference type="Rhea" id="RHEA:30519"/>
        <dbReference type="ChEBI" id="CHEBI:15378"/>
        <dbReference type="ChEBI" id="CHEBI:33019"/>
        <dbReference type="ChEBI" id="CHEBI:37565"/>
        <dbReference type="ChEBI" id="CHEBI:58702"/>
        <dbReference type="ChEBI" id="CHEBI:143701"/>
        <dbReference type="EC" id="2.7.7.105"/>
    </reaction>
</comment>
<comment type="pathway">
    <text evidence="1">Cofactor biosynthesis; coenzyme F420 biosynthesis.</text>
</comment>
<comment type="miscellaneous">
    <text evidence="2">The exact nature of the substrate is currently not known. This entry has been annotated based on its similarity to Actinobacteria.</text>
</comment>
<comment type="similarity">
    <text evidence="1">Belongs to the CofC family.</text>
</comment>
<reference key="1">
    <citation type="submission" date="2009-01" db="EMBL/GenBank/DDBJ databases">
        <title>Complete sequence of Chloroflexus sp. Y-400-fl.</title>
        <authorList>
            <consortium name="US DOE Joint Genome Institute"/>
            <person name="Lucas S."/>
            <person name="Copeland A."/>
            <person name="Lapidus A."/>
            <person name="Glavina del Rio T."/>
            <person name="Dalin E."/>
            <person name="Tice H."/>
            <person name="Bruce D."/>
            <person name="Goodwin L."/>
            <person name="Pitluck S."/>
            <person name="Sims D."/>
            <person name="Kiss H."/>
            <person name="Brettin T."/>
            <person name="Detter J.C."/>
            <person name="Han C."/>
            <person name="Larimer F."/>
            <person name="Land M."/>
            <person name="Hauser L."/>
            <person name="Kyrpides N."/>
            <person name="Ovchinnikova G."/>
            <person name="Bryant D.A."/>
            <person name="Richardson P."/>
        </authorList>
    </citation>
    <scope>NUCLEOTIDE SEQUENCE [LARGE SCALE GENOMIC DNA]</scope>
    <source>
        <strain>ATCC 29364 / DSM 637 / Y-400-fl</strain>
    </source>
</reference>
<keyword id="KW-0342">GTP-binding</keyword>
<keyword id="KW-0547">Nucleotide-binding</keyword>
<keyword id="KW-0548">Nucleotidyltransferase</keyword>
<keyword id="KW-0808">Transferase</keyword>
<evidence type="ECO:0000255" key="1">
    <source>
        <dbReference type="HAMAP-Rule" id="MF_02114"/>
    </source>
</evidence>
<evidence type="ECO:0000305" key="2"/>
<feature type="chain" id="PRO_0000398680" description="Phosphoenolpyruvate guanylyltransferase">
    <location>
        <begin position="1"/>
        <end position="205"/>
    </location>
</feature>
<feature type="binding site" evidence="1">
    <location>
        <position position="138"/>
    </location>
    <ligand>
        <name>phosphoenolpyruvate</name>
        <dbReference type="ChEBI" id="CHEBI:58702"/>
    </ligand>
</feature>
<feature type="binding site" evidence="1">
    <location>
        <position position="154"/>
    </location>
    <ligand>
        <name>phosphoenolpyruvate</name>
        <dbReference type="ChEBI" id="CHEBI:58702"/>
    </ligand>
</feature>
<feature type="binding site" evidence="1">
    <location>
        <position position="157"/>
    </location>
    <ligand>
        <name>phosphoenolpyruvate</name>
        <dbReference type="ChEBI" id="CHEBI:58702"/>
    </ligand>
</feature>
<dbReference type="EC" id="2.7.7.105" evidence="1"/>
<dbReference type="EMBL" id="CP001364">
    <property type="protein sequence ID" value="ACM51656.1"/>
    <property type="molecule type" value="Genomic_DNA"/>
</dbReference>
<dbReference type="SMR" id="B9LHE7"/>
<dbReference type="KEGG" id="chl:Chy400_0217"/>
<dbReference type="HOGENOM" id="CLU_076569_1_0_0"/>
<dbReference type="OrthoDB" id="9151145at2"/>
<dbReference type="UniPathway" id="UPA00071"/>
<dbReference type="GO" id="GO:0005525">
    <property type="term" value="F:GTP binding"/>
    <property type="evidence" value="ECO:0007669"/>
    <property type="project" value="UniProtKB-KW"/>
</dbReference>
<dbReference type="GO" id="GO:0043814">
    <property type="term" value="F:phospholactate guanylyltransferase activity"/>
    <property type="evidence" value="ECO:0007669"/>
    <property type="project" value="InterPro"/>
</dbReference>
<dbReference type="GO" id="GO:0052645">
    <property type="term" value="P:F420-0 metabolic process"/>
    <property type="evidence" value="ECO:0007669"/>
    <property type="project" value="UniProtKB-UniRule"/>
</dbReference>
<dbReference type="Gene3D" id="3.90.550.10">
    <property type="entry name" value="Spore Coat Polysaccharide Biosynthesis Protein SpsA, Chain A"/>
    <property type="match status" value="1"/>
</dbReference>
<dbReference type="HAMAP" id="MF_02114">
    <property type="entry name" value="CofC"/>
    <property type="match status" value="1"/>
</dbReference>
<dbReference type="InterPro" id="IPR002835">
    <property type="entry name" value="CofC"/>
</dbReference>
<dbReference type="InterPro" id="IPR029044">
    <property type="entry name" value="Nucleotide-diphossugar_trans"/>
</dbReference>
<dbReference type="NCBIfam" id="TIGR03552">
    <property type="entry name" value="F420_cofC"/>
    <property type="match status" value="1"/>
</dbReference>
<dbReference type="PANTHER" id="PTHR40392">
    <property type="entry name" value="2-PHOSPHO-L-LACTATE GUANYLYLTRANSFERASE"/>
    <property type="match status" value="1"/>
</dbReference>
<dbReference type="PANTHER" id="PTHR40392:SF1">
    <property type="entry name" value="2-PHOSPHO-L-LACTATE GUANYLYLTRANSFERASE"/>
    <property type="match status" value="1"/>
</dbReference>
<dbReference type="Pfam" id="PF01983">
    <property type="entry name" value="CofC"/>
    <property type="match status" value="1"/>
</dbReference>
<dbReference type="SUPFAM" id="SSF53448">
    <property type="entry name" value="Nucleotide-diphospho-sugar transferases"/>
    <property type="match status" value="1"/>
</dbReference>
<sequence length="205" mass="22501">MIGIVIPIKRLHLAKSRLIDLLDPADRQQLVVTMVRHVITTARQAVSYLSIPARIWLVSPEPTLATDSEGIEWLPDNQEELNAALTEARQRIQAAGVQIMMVLAGDLPFVTVRDLILLSEALTDNDVVVAPDQHGQGTNALGLHLPSQLPFGFGPDSAGYHLRTAARLGLRASLISTPTLAFDLDDGERLQQYYRCIASCDNFAR</sequence>
<accession>B9LHE7</accession>